<keyword id="KW-0068">Autocatalytic cleavage</keyword>
<keyword id="KW-0106">Calcium</keyword>
<keyword id="KW-0186">Copper</keyword>
<keyword id="KW-0903">Direct protein sequencing</keyword>
<keyword id="KW-1015">Disulfide bond</keyword>
<keyword id="KW-0325">Glycoprotein</keyword>
<keyword id="KW-0479">Metal-binding</keyword>
<keyword id="KW-1185">Reference proteome</keyword>
<keyword id="KW-0677">Repeat</keyword>
<keyword id="KW-0964">Secreted</keyword>
<keyword id="KW-0732">Signal</keyword>
<feature type="signal peptide" evidence="4">
    <location>
        <begin position="1"/>
        <end position="20"/>
    </location>
</feature>
<feature type="chain" id="PRO_0000019282" description="Mucin-2">
    <location>
        <begin position="21"/>
        <end position="1513" status="greater than"/>
    </location>
</feature>
<feature type="domain" description="VWFD 1" evidence="5">
    <location>
        <begin position="32"/>
        <end position="204"/>
    </location>
</feature>
<feature type="domain" description="TIL">
    <location>
        <begin position="292"/>
        <end position="348"/>
    </location>
</feature>
<feature type="domain" description="VWFC">
    <location>
        <begin position="350"/>
        <end position="410"/>
    </location>
</feature>
<feature type="domain" description="VWFD 2" evidence="5">
    <location>
        <begin position="386"/>
        <end position="561"/>
    </location>
</feature>
<feature type="domain" description="VWFD 3" evidence="5">
    <location>
        <begin position="856"/>
        <end position="1025"/>
    </location>
</feature>
<feature type="repeat" description="1">
    <location>
        <begin position="1392"/>
        <end position="1407"/>
    </location>
</feature>
<feature type="repeat" description="2">
    <location>
        <begin position="1408"/>
        <end position="1423"/>
    </location>
</feature>
<feature type="repeat" description="3">
    <location>
        <begin position="1424"/>
        <end position="1434"/>
    </location>
</feature>
<feature type="repeat" description="4">
    <location>
        <begin position="1435"/>
        <end position="1445"/>
    </location>
</feature>
<feature type="repeat" description="5">
    <location>
        <begin position="1446"/>
        <end position="1456"/>
    </location>
</feature>
<feature type="repeat" description="6">
    <location>
        <begin position="1457"/>
        <end position="1467"/>
    </location>
</feature>
<feature type="repeat" description="7">
    <location>
        <begin position="1468"/>
        <end position="1478"/>
    </location>
</feature>
<feature type="repeat" description="8">
    <location>
        <begin position="1479"/>
        <end position="1489"/>
    </location>
</feature>
<feature type="repeat" description="9">
    <location>
        <begin position="1490"/>
        <end position="1500"/>
    </location>
</feature>
<feature type="repeat" description="10">
    <location>
        <begin position="1501"/>
        <end position="1511"/>
    </location>
</feature>
<feature type="repeat" description="11">
    <location>
        <begin position="1512"/>
        <end position="1513" status="greater than"/>
    </location>
</feature>
<feature type="region of interest" description="Approximate repeats">
    <location>
        <begin position="1392"/>
        <end position="1513" status="greater than"/>
    </location>
</feature>
<feature type="region of interest" description="Disordered" evidence="6">
    <location>
        <begin position="1392"/>
        <end position="1513"/>
    </location>
</feature>
<feature type="binding site" evidence="1">
    <location>
        <position position="46"/>
    </location>
    <ligand>
        <name>Ca(2+)</name>
        <dbReference type="ChEBI" id="CHEBI:29108"/>
        <label>1</label>
    </ligand>
</feature>
<feature type="binding site" evidence="1">
    <location>
        <position position="143"/>
    </location>
    <ligand>
        <name>Cu(+)</name>
        <dbReference type="ChEBI" id="CHEBI:49552"/>
    </ligand>
</feature>
<feature type="binding site" evidence="1">
    <location>
        <position position="151"/>
    </location>
    <ligand>
        <name>Cu(+)</name>
        <dbReference type="ChEBI" id="CHEBI:49552"/>
    </ligand>
</feature>
<feature type="binding site" evidence="1">
    <location>
        <position position="153"/>
    </location>
    <ligand>
        <name>Cu(2+)</name>
        <dbReference type="ChEBI" id="CHEBI:29036"/>
    </ligand>
</feature>
<feature type="binding site" evidence="1">
    <location>
        <position position="168"/>
    </location>
    <ligand>
        <name>Ca(2+)</name>
        <dbReference type="ChEBI" id="CHEBI:29108"/>
        <label>1</label>
    </ligand>
</feature>
<feature type="binding site" evidence="1">
    <location>
        <position position="170"/>
    </location>
    <ligand>
        <name>Ca(2+)</name>
        <dbReference type="ChEBI" id="CHEBI:29108"/>
        <label>1</label>
    </ligand>
</feature>
<feature type="binding site" evidence="1">
    <location>
        <position position="177"/>
    </location>
    <ligand>
        <name>Ca(2+)</name>
        <dbReference type="ChEBI" id="CHEBI:29108"/>
        <label>1</label>
    </ligand>
</feature>
<feature type="binding site" evidence="1">
    <location>
        <position position="274"/>
    </location>
    <ligand>
        <name>Cu(2+)</name>
        <dbReference type="ChEBI" id="CHEBI:29036"/>
    </ligand>
</feature>
<feature type="binding site" evidence="1">
    <location>
        <position position="321"/>
    </location>
    <ligand>
        <name>Cu(2+)</name>
        <dbReference type="ChEBI" id="CHEBI:29036"/>
    </ligand>
</feature>
<feature type="binding site" evidence="1">
    <location>
        <position position="323"/>
    </location>
    <ligand>
        <name>Cu(+)</name>
        <dbReference type="ChEBI" id="CHEBI:49552"/>
    </ligand>
</feature>
<feature type="binding site" evidence="1">
    <location>
        <position position="400"/>
    </location>
    <ligand>
        <name>Ca(2+)</name>
        <dbReference type="ChEBI" id="CHEBI:29108"/>
        <label>2</label>
    </ligand>
</feature>
<feature type="binding site" evidence="1">
    <location>
        <position position="527"/>
    </location>
    <ligand>
        <name>Ca(2+)</name>
        <dbReference type="ChEBI" id="CHEBI:29108"/>
        <label>2</label>
    </ligand>
</feature>
<feature type="binding site" evidence="1">
    <location>
        <position position="529"/>
    </location>
    <ligand>
        <name>Ca(2+)</name>
        <dbReference type="ChEBI" id="CHEBI:29108"/>
        <label>2</label>
    </ligand>
</feature>
<feature type="binding site" evidence="1">
    <location>
        <position position="531"/>
    </location>
    <ligand>
        <name>Ca(2+)</name>
        <dbReference type="ChEBI" id="CHEBI:29108"/>
        <label>2</label>
    </ligand>
</feature>
<feature type="binding site" evidence="1">
    <location>
        <position position="534"/>
    </location>
    <ligand>
        <name>Ca(2+)</name>
        <dbReference type="ChEBI" id="CHEBI:29108"/>
        <label>2</label>
    </ligand>
</feature>
<feature type="binding site" evidence="1">
    <location>
        <position position="535"/>
    </location>
    <ligand>
        <name>Ca(2+)</name>
        <dbReference type="ChEBI" id="CHEBI:29108"/>
        <label>2</label>
    </ligand>
</feature>
<feature type="binding site" evidence="1">
    <location>
        <position position="870"/>
    </location>
    <ligand>
        <name>Ca(2+)</name>
        <dbReference type="ChEBI" id="CHEBI:29108"/>
        <label>3</label>
    </ligand>
</feature>
<feature type="binding site" evidence="1">
    <location>
        <position position="991"/>
    </location>
    <ligand>
        <name>Ca(2+)</name>
        <dbReference type="ChEBI" id="CHEBI:29108"/>
        <label>3</label>
    </ligand>
</feature>
<feature type="binding site" evidence="1">
    <location>
        <position position="993"/>
    </location>
    <ligand>
        <name>Ca(2+)</name>
        <dbReference type="ChEBI" id="CHEBI:29108"/>
        <label>3</label>
    </ligand>
</feature>
<feature type="binding site" evidence="1">
    <location>
        <position position="998"/>
    </location>
    <ligand>
        <name>Ca(2+)</name>
        <dbReference type="ChEBI" id="CHEBI:29108"/>
        <label>3</label>
    </ligand>
</feature>
<feature type="binding site" evidence="1">
    <location>
        <position position="999"/>
    </location>
    <ligand>
        <name>Ca(2+)</name>
        <dbReference type="ChEBI" id="CHEBI:29108"/>
        <label>3</label>
    </ligand>
</feature>
<feature type="binding site" evidence="1">
    <location>
        <position position="1303"/>
    </location>
    <ligand>
        <name>Ca(2+)</name>
        <dbReference type="ChEBI" id="CHEBI:29108"/>
        <label>5</label>
    </ligand>
</feature>
<feature type="binding site" evidence="1">
    <location>
        <position position="1306"/>
    </location>
    <ligand>
        <name>Ca(2+)</name>
        <dbReference type="ChEBI" id="CHEBI:29108"/>
        <label>4</label>
    </ligand>
</feature>
<feature type="binding site" evidence="1">
    <location>
        <position position="1309"/>
    </location>
    <ligand>
        <name>Ca(2+)</name>
        <dbReference type="ChEBI" id="CHEBI:29108"/>
        <label>4</label>
    </ligand>
</feature>
<feature type="binding site" evidence="1">
    <location>
        <position position="1313"/>
    </location>
    <ligand>
        <name>Ca(2+)</name>
        <dbReference type="ChEBI" id="CHEBI:29108"/>
        <label>4</label>
    </ligand>
</feature>
<feature type="binding site" evidence="1">
    <location>
        <position position="1314"/>
    </location>
    <ligand>
        <name>Ca(2+)</name>
        <dbReference type="ChEBI" id="CHEBI:29108"/>
        <label>5</label>
    </ligand>
</feature>
<feature type="binding site" evidence="1">
    <location>
        <position position="1316"/>
    </location>
    <ligand>
        <name>Ca(2+)</name>
        <dbReference type="ChEBI" id="CHEBI:29108"/>
        <label>5</label>
    </ligand>
</feature>
<feature type="binding site" evidence="1">
    <location>
        <position position="1373"/>
    </location>
    <ligand>
        <name>Ca(2+)</name>
        <dbReference type="ChEBI" id="CHEBI:29108"/>
        <label>5</label>
    </ligand>
</feature>
<feature type="binding site" evidence="1">
    <location>
        <position position="1374"/>
    </location>
    <ligand>
        <name>Ca(2+)</name>
        <dbReference type="ChEBI" id="CHEBI:29108"/>
        <label>5</label>
    </ligand>
</feature>
<feature type="glycosylation site" description="N-linked (GlcNAc...) asparagine" evidence="4">
    <location>
        <position position="160"/>
    </location>
</feature>
<feature type="glycosylation site" description="N-linked (GlcNAc...) asparagine" evidence="4">
    <location>
        <position position="420"/>
    </location>
</feature>
<feature type="glycosylation site" description="N-linked (GlcNAc...) asparagine" evidence="4">
    <location>
        <position position="667"/>
    </location>
</feature>
<feature type="glycosylation site" description="N-linked (GlcNAc...) asparagine" evidence="4">
    <location>
        <position position="767"/>
    </location>
</feature>
<feature type="glycosylation site" description="N-linked (GlcNAc...) asparagine" evidence="4">
    <location>
        <position position="837"/>
    </location>
</feature>
<feature type="glycosylation site" description="N-linked (GlcNAc...) asparagine" evidence="4">
    <location>
        <position position="892"/>
    </location>
</feature>
<feature type="glycosylation site" description="N-linked (GlcNAc...) asparagine" evidence="4">
    <location>
        <position position="1136"/>
    </location>
</feature>
<feature type="glycosylation site" description="N-linked (GlcNAc...) asparagine" evidence="4">
    <location>
        <position position="1151"/>
    </location>
</feature>
<feature type="glycosylation site" description="N-linked (GlcNAc...) asparagine" evidence="4">
    <location>
        <position position="1212"/>
    </location>
</feature>
<feature type="glycosylation site" description="N-linked (GlcNAc...) asparagine" evidence="4">
    <location>
        <position position="1227"/>
    </location>
</feature>
<feature type="glycosylation site" description="N-linked (GlcNAc...) asparagine" evidence="4">
    <location>
        <position position="1243"/>
    </location>
</feature>
<feature type="glycosylation site" description="O-linked (GalNAc) threonine" evidence="1">
    <location>
        <position position="1264"/>
    </location>
</feature>
<feature type="glycosylation site" description="O-linked (GalNAc) threonine" evidence="1">
    <location>
        <position position="1267"/>
    </location>
</feature>
<feature type="glycosylation site" description="O-linked (GalNAc) threonine" evidence="1">
    <location>
        <position position="1268"/>
    </location>
</feature>
<feature type="glycosylation site" description="O-linked (GalNAc) threonine" evidence="1">
    <location>
        <position position="1280"/>
    </location>
</feature>
<feature type="glycosylation site" description="O-linked (GalNAc) serine" evidence="1">
    <location>
        <position position="1286"/>
    </location>
</feature>
<feature type="glycosylation site" description="O-linked (GalNAc) threonine" evidence="1">
    <location>
        <position position="1290"/>
    </location>
</feature>
<feature type="glycosylation site" description="N-linked (GlcNAc...) asparagine" evidence="4">
    <location>
        <position position="1350"/>
    </location>
</feature>
<feature type="disulfide bond" evidence="5">
    <location>
        <begin position="34"/>
        <end position="166"/>
    </location>
</feature>
<feature type="disulfide bond" evidence="5">
    <location>
        <begin position="56"/>
        <end position="203"/>
    </location>
</feature>
<feature type="disulfide bond" evidence="1">
    <location>
        <begin position="64"/>
        <end position="163"/>
    </location>
</feature>
<feature type="disulfide bond" evidence="1">
    <location>
        <begin position="215"/>
        <end position="252"/>
    </location>
</feature>
<feature type="disulfide bond" evidence="1">
    <location>
        <begin position="222"/>
        <end position="247"/>
    </location>
</feature>
<feature type="disulfide bond" evidence="1">
    <location>
        <begin position="234"/>
        <end position="272"/>
    </location>
</feature>
<feature type="disulfide bond" evidence="1">
    <location>
        <begin position="254"/>
        <end position="260"/>
    </location>
</feature>
<feature type="disulfide bond" evidence="1">
    <location>
        <begin position="262"/>
        <end position="288"/>
    </location>
</feature>
<feature type="disulfide bond" evidence="1">
    <location>
        <begin position="292"/>
        <end position="326"/>
    </location>
</feature>
<feature type="disulfide bond" evidence="1">
    <location>
        <begin position="309"/>
        <end position="348"/>
    </location>
</feature>
<feature type="disulfide bond" evidence="1">
    <location>
        <begin position="328"/>
        <end position="342"/>
    </location>
</feature>
<feature type="disulfide bond" evidence="1">
    <location>
        <begin position="350"/>
        <end position="372"/>
    </location>
</feature>
<feature type="disulfide bond" evidence="1">
    <location>
        <begin position="367"/>
        <end position="384"/>
    </location>
</feature>
<feature type="disulfide bond" evidence="1">
    <location>
        <begin position="370"/>
        <end position="379"/>
    </location>
</feature>
<feature type="disulfide bond" evidence="5">
    <location>
        <begin position="388"/>
        <end position="525"/>
    </location>
</feature>
<feature type="disulfide bond" evidence="5">
    <location>
        <begin position="410"/>
        <end position="560"/>
    </location>
</feature>
<feature type="disulfide bond" evidence="5">
    <location>
        <begin position="432"/>
        <end position="440"/>
    </location>
</feature>
<feature type="disulfide bond" evidence="1">
    <location>
        <begin position="571"/>
        <end position="616"/>
    </location>
</feature>
<feature type="disulfide bond" evidence="1">
    <location>
        <begin position="585"/>
        <end position="611"/>
    </location>
</feature>
<feature type="disulfide bond" evidence="1">
    <location>
        <begin position="598"/>
        <end position="636"/>
    </location>
</feature>
<feature type="disulfide bond" evidence="1">
    <location>
        <begin position="618"/>
        <end position="624"/>
    </location>
</feature>
<feature type="disulfide bond" evidence="1">
    <location>
        <begin position="626"/>
        <end position="651"/>
    </location>
</feature>
<feature type="disulfide bond" evidence="1">
    <location>
        <begin position="658"/>
        <end position="695"/>
    </location>
</feature>
<feature type="disulfide bond" evidence="1">
    <location>
        <begin position="671"/>
        <end position="685"/>
    </location>
</feature>
<feature type="disulfide bond" evidence="1">
    <location>
        <begin position="675"/>
        <end position="715"/>
    </location>
</feature>
<feature type="disulfide bond" evidence="1">
    <location>
        <begin position="697"/>
        <end position="709"/>
    </location>
</feature>
<feature type="disulfide bond" evidence="1">
    <location>
        <begin position="717"/>
        <end position="739"/>
    </location>
</feature>
<feature type="disulfide bond" evidence="1">
    <location>
        <begin position="737"/>
        <end position="746"/>
    </location>
</feature>
<feature type="disulfide bond" evidence="1">
    <location>
        <begin position="781"/>
        <end position="817"/>
    </location>
</feature>
<feature type="disulfide bond" evidence="1">
    <location>
        <begin position="799"/>
        <end position="811"/>
    </location>
</feature>
<feature type="disulfide bond" evidence="1">
    <location>
        <begin position="819"/>
        <end position="842"/>
    </location>
</feature>
<feature type="disulfide bond" evidence="1">
    <location>
        <begin position="836"/>
        <end position="854"/>
    </location>
</feature>
<feature type="disulfide bond" evidence="1">
    <location>
        <begin position="840"/>
        <end position="849"/>
    </location>
</feature>
<feature type="disulfide bond" evidence="5">
    <location>
        <begin position="858"/>
        <end position="989"/>
    </location>
</feature>
<feature type="disulfide bond" evidence="5">
    <location>
        <begin position="880"/>
        <end position="1024"/>
    </location>
</feature>
<feature type="disulfide bond" evidence="5">
    <location>
        <begin position="889"/>
        <end position="986"/>
    </location>
</feature>
<feature type="disulfide bond" evidence="5">
    <location>
        <begin position="906"/>
        <end position="913"/>
    </location>
</feature>
<feature type="disulfide bond" evidence="1">
    <location>
        <begin position="1034"/>
        <end position="1077"/>
    </location>
</feature>
<feature type="disulfide bond" evidence="1">
    <location>
        <begin position="1048"/>
        <end position="1072"/>
    </location>
</feature>
<feature type="disulfide bond" evidence="1">
    <location>
        <begin position="1059"/>
        <end position="1099"/>
    </location>
</feature>
<feature type="disulfide bond" evidence="1">
    <location>
        <begin position="1079"/>
        <end position="1087"/>
    </location>
</feature>
<feature type="disulfide bond" description="Interchain" evidence="1">
    <location>
        <position position="1085"/>
    </location>
</feature>
<feature type="disulfide bond" evidence="1">
    <location>
        <begin position="1089"/>
        <end position="1114"/>
    </location>
</feature>
<feature type="disulfide bond" evidence="1">
    <location>
        <begin position="1105"/>
        <end position="1134"/>
    </location>
</feature>
<feature type="disulfide bond" evidence="1">
    <location>
        <begin position="1118"/>
        <end position="1160"/>
    </location>
</feature>
<feature type="disulfide bond" description="Interchain" evidence="1">
    <location>
        <position position="1127"/>
    </location>
</feature>
<feature type="disulfide bond" evidence="1">
    <location>
        <begin position="1142"/>
        <end position="1184"/>
    </location>
</feature>
<feature type="disulfide bond" evidence="1">
    <location>
        <begin position="1164"/>
        <end position="1178"/>
    </location>
</feature>
<feature type="disulfide bond" evidence="1">
    <location>
        <begin position="1186"/>
        <end position="1210"/>
    </location>
</feature>
<feature type="disulfide bond" evidence="1">
    <location>
        <begin position="1205"/>
        <end position="1235"/>
    </location>
</feature>
<feature type="disulfide bond" evidence="1">
    <location>
        <begin position="1208"/>
        <end position="1218"/>
    </location>
</feature>
<feature type="non-terminal residue">
    <location>
        <position position="1513"/>
    </location>
</feature>
<accession>Q62635</accession>
<organism>
    <name type="scientific">Rattus norvegicus</name>
    <name type="common">Rat</name>
    <dbReference type="NCBI Taxonomy" id="10116"/>
    <lineage>
        <taxon>Eukaryota</taxon>
        <taxon>Metazoa</taxon>
        <taxon>Chordata</taxon>
        <taxon>Craniata</taxon>
        <taxon>Vertebrata</taxon>
        <taxon>Euteleostomi</taxon>
        <taxon>Mammalia</taxon>
        <taxon>Eutheria</taxon>
        <taxon>Euarchontoglires</taxon>
        <taxon>Glires</taxon>
        <taxon>Rodentia</taxon>
        <taxon>Myomorpha</taxon>
        <taxon>Muroidea</taxon>
        <taxon>Muridae</taxon>
        <taxon>Murinae</taxon>
        <taxon>Rattus</taxon>
    </lineage>
</organism>
<proteinExistence type="evidence at protein level"/>
<reference key="1">
    <citation type="journal article" date="1994" name="J. Biol. Chem.">
        <title>Molecular cloning of the amino-terminal region of a rat MUC 2 mucin gene homologue. Evidence for expression in both intestine and airway.</title>
        <authorList>
            <person name="Ohmori H."/>
            <person name="Dohrman A.F."/>
            <person name="Gallup M."/>
            <person name="Tsuda T."/>
            <person name="Kai H."/>
            <person name="Gum J.R. Jr."/>
            <person name="Kim Y.S."/>
            <person name="Basbaum C.B."/>
        </authorList>
    </citation>
    <scope>NUCLEOTIDE SEQUENCE [MRNA]</scope>
    <scope>TISSUE SPECIFICITY</scope>
    <source>
        <tissue>Intestine</tissue>
    </source>
</reference>
<reference key="2">
    <citation type="journal article" date="1998" name="Biochem. J.">
        <title>Susceptibility of the cysteine-rich N-terminal and C-terminal ends of rat intestinal mucin Muc 2 to proteolytic cleavage.</title>
        <authorList>
            <person name="Khatri I.A."/>
            <person name="Forstner G.G."/>
            <person name="Forstner J.F."/>
        </authorList>
    </citation>
    <scope>PROTEIN SEQUENCE OF 21-36</scope>
    <source>
        <tissue>Intestinal epithelium</tissue>
    </source>
</reference>
<sequence length="1513" mass="166038">MGLPLARLVAVCLVLALAKGLELQKEARSRNHVCSTWGDFHYKTFDGDVFRFPGLCDYNFASDCRDSYKEFAVHLKRGLDKAGGHSSIESVLITIKDDTIYLTHKLAVVNGAMVSTPHYSSGLLIEKNDAYTKVYSRAGLSLMWNREDALMVELDGRFQNHTCGLCGDFNGMQANNEFLSDGIRFSAIEFGNMQKINKPEVVCEDPEEVQEPESCSEHRAECERLLTSTAFEDCQARVPVELYVLACMHDRCQCPQGGACECSTLAEFSRQCSHAGGRPENWRTASLCPKKCPGNMVYLESGSPWLDTCSHLEVSSLCEEHYMDGCFCPEGTVYDDITGSGCIPVSQCHCKLHGHLYMPGQEITNDCEQCVCNAGRWMCKDLPCPETCALEGGSHITTFDGKKFTFHGDCYYVLTKTKYNDSYALLGELASCGSTDKQTCLKTVVLLTDNKKNVVAFKSGGSVLLNEMEVSLPHVAASFSIFKPSSYHIVVNTMFGLRLQIQLVPVMQLFVTLDQSAQGQVQGLCGNFNGLESDDFMTSGGMVEATGAGFANTWKAQSSCHDKLDWLDDPCPLNIESANYAEHWCSLLKRSETPFARCHLAVDPTEYYKRCKYDTCNCQNNEDCMCAALSSYARACAAKGVMLWGWRESVCNKDVHACPSSQIFMYNLTTCQQTCRSISEGDTHCLKGFAPVEGCGCPDHTFMDEKGRCVPLSKCSCYHHGLYLEAGDVILRQEERCICRNGRLQCTQVKLIGHTCLSPQILVDCNNLTALAIREPRPTSCQTLVARYYHTECISGCVCPDGLLDNGRGGCVVEDECPCIHNKQFYDSGKSIKLDCNNTCTCQKGRWECTRYACHSTCSIYGSGHYITFDGKHYDFDGHCSYVAVQDYCGQNSTGSFSIITENVPCGTTGVTCSKAIKIFIGGTELKLVDKHRVVKQLEEGHHVPFITREVGLYLVVEVSSGIIVIWDKKTTIFIKLDPSYKGNVCGLCGNFDDQTKNDFTTRDHMVVASELDFGNSWKEASTCPDVSHNPDPCSLNPHRRSWAEKQCSIIKSDVFLACHGKVDPTVFYDACVHDSCSCDTGGDCECFCSAVASYAQECTKAEACVFWRTPDLCPVFCDYYNPPDECEWHYEPCGNRSFETCRTLNGIHSNISVSYLEGCYPRCPEDRPIYDEDLKKCVSGDKCGCYIEDTRYPPGGSVPTDEICMSCTCTNTSEIICRPDEGKIINQTQDGIFCYWETCGSNGTVEKHFEICVSSTLSPTSMTSFTTTSTPISTTPISTTITTTSATATTTVPCCFWSDWINNNHPTSGNGGDRENFEHVCSAPENIECRAATDPKLDWTELGQKVQCNVSEGLICNNEDQYGTGQFELCYDYEIRVNCCFPMEYCLSTVSPTTSTPISSTPQPTSSPTTLPTTSPLTSSATSPTTSHITSTVSPTTSPTTSTTSPTTSPTTSTTSPTTSTTSPTPSPTTSTTSPTPSPTTSTTSPTPSPTTSTTSPTTSPITSPTTSTTSP</sequence>
<evidence type="ECO:0000250" key="1">
    <source>
        <dbReference type="UniProtKB" id="Q02817"/>
    </source>
</evidence>
<evidence type="ECO:0000250" key="2">
    <source>
        <dbReference type="UniProtKB" id="Q80Z19"/>
    </source>
</evidence>
<evidence type="ECO:0000250" key="3">
    <source>
        <dbReference type="UniProtKB" id="Q9HC84"/>
    </source>
</evidence>
<evidence type="ECO:0000255" key="4"/>
<evidence type="ECO:0000255" key="5">
    <source>
        <dbReference type="PROSITE-ProRule" id="PRU00580"/>
    </source>
</evidence>
<evidence type="ECO:0000256" key="6">
    <source>
        <dbReference type="SAM" id="MobiDB-lite"/>
    </source>
</evidence>
<evidence type="ECO:0000269" key="7">
    <source>
    </source>
</evidence>
<evidence type="ECO:0000303" key="8">
    <source>
    </source>
</evidence>
<gene>
    <name evidence="8" type="primary">Muc2</name>
</gene>
<name>MUC2_RAT</name>
<comment type="function">
    <text evidence="1 2">Coats the epithelia of the intestines and other mucus membrane-containing organs to provide a protective, lubricating barrier against particles and infectious agents at mucosal surfaces. Major constituent of the colon mucus, which is mainly formed by large polymeric networks of MUC2 secreted by goblet cells that cover the exposed surfaces of intestine. MUC2 networks form hydrogels that guard the underlying epithelium from pathogens and other hazardous matter entering from the outside world, while permitting nutrient absorption and gas exchange. Acts as a divalent copper chaperone that protects intestinal cells from copper toxicity and facilitates nutritional copper unptake into cells. Binds both Cu(2+) and its reduced form, Cu(1+), at two juxtaposed binding sites: Cu(2+), once reduced to Cu(1+) by vitamin C (ascorbate) or other dietary antioxidants, transits to the other binding site. MUC2-bound Cu(1+) is protected from oxidation in aerobic environments, and can be released for nutritional delivery to cells. Mucin gels store antimicrobial molecules that participate in innate immunity. Mucin glycoproteins also house and feed the microbiome, lubricate tissue surfaces, and may facilitate the removal of contaminants and waste products from the body (By similarity). Goblet cells synthesize two forms of MUC2 mucin that differ in branched chain O-glycosylation and the site of production in the colon: a (1) 'thick' mucus that wraps the microbiota to form fecal pellets is produced in the proximal, ascending colon. 'Thick' mucus transits along the descending colon and is lubricated by a (2) 'thin' MUC2 mucus produced in the distal colon which adheres to the 'thick' mucus (By similarity).</text>
</comment>
<comment type="subunit">
    <text evidence="1 3">Homomultimer; disulfide-linked. The N- and C-terminus mediate their assembly into higher order structures to form filaments (By similarity). The CTCK domains of two polypeptides associate in the endoplasmic reticulum to generate intermolecularly disulfide-bonded dimers (By similarity). These dimers progress to the Golgi apparatus, which is a more acidic environment than the endoplasmic reticulum. Under acidic conditions, the N-termini form non-covalent intermolecular interactions that juxtapose assemblies of the third VWD domain (VWD3) from different CTCK-linked dimers. The VWD3 assemblies then become disulfide bonded to one another to produce long, disulfide-linked polymers that remain highly compact until secretion. Interacts with FCGBP. Interacts with AGR2; disulfide-linked (By similarity).</text>
</comment>
<comment type="subcellular location">
    <subcellularLocation>
        <location evidence="1">Secreted</location>
    </subcellularLocation>
    <text evidence="1 2">In the intestine, secreted into the inner and outer mucus layers (By similarity). Before secretion, mucin polymers are stored in dedicated secretory vesicles (By similarity).</text>
</comment>
<comment type="tissue specificity">
    <text evidence="7">Expressed in intestine and airway.</text>
</comment>
<comment type="domain">
    <text evidence="3">The CTCK domain mediates interchain disulfide bonds with another molecule of MUC2.</text>
</comment>
<comment type="PTM">
    <text evidence="1 2">O-glycosylated. O-glycosylation is required for mucin assembly (By similarity). Goblet cells synthesize two forms of mucin that differ in branched chain O-glycosylation and the site of production in the colon (By similarity).</text>
</comment>
<comment type="PTM">
    <text evidence="2">May undergo proteolytic cleavage in the outer mucus layer of the colon, contributing to the expanded volume and loose nature of this layer which allows for bacterial colonization in contrast to the inner mucus layer which is dense and devoid of bacteria.</text>
</comment>
<comment type="PTM">
    <text evidence="1">At low pH of 6 and under, undergoes autocatalytic cleavage in vitro in the N-terminal region of the fourth VWD domain. It is likely that this also occurs in vivo and is triggered by the low pH of the late secretory pathway.</text>
</comment>
<dbReference type="EMBL" id="U07615">
    <property type="protein sequence ID" value="AAA21655.2"/>
    <property type="molecule type" value="mRNA"/>
</dbReference>
<dbReference type="PIR" id="A54895">
    <property type="entry name" value="A54895"/>
</dbReference>
<dbReference type="SMR" id="Q62635"/>
<dbReference type="STRING" id="10116.ENSRNOP00000064975"/>
<dbReference type="MEROPS" id="I08.954"/>
<dbReference type="GlyConnect" id="380">
    <property type="glycosylation" value="63 O-Linked glycans"/>
</dbReference>
<dbReference type="GlyConnect" id="381">
    <property type="glycosylation" value="28 O-Linked glycans"/>
</dbReference>
<dbReference type="GlyCosmos" id="Q62635">
    <property type="glycosylation" value="12 sites, 72 glycans"/>
</dbReference>
<dbReference type="GlyGen" id="Q62635">
    <property type="glycosylation" value="28 sites, 71 O-linked glycans (1 site)"/>
</dbReference>
<dbReference type="PhosphoSitePlus" id="Q62635"/>
<dbReference type="AGR" id="RGD:3123"/>
<dbReference type="RGD" id="3123">
    <property type="gene designation" value="Muc2"/>
</dbReference>
<dbReference type="InParanoid" id="Q62635"/>
<dbReference type="PhylomeDB" id="Q62635"/>
<dbReference type="Reactome" id="R-RNO-913709">
    <property type="pathway name" value="O-linked glycosylation of mucins"/>
</dbReference>
<dbReference type="Reactome" id="R-RNO-977068">
    <property type="pathway name" value="Termination of O-glycan biosynthesis"/>
</dbReference>
<dbReference type="Proteomes" id="UP000002494">
    <property type="component" value="Unplaced"/>
</dbReference>
<dbReference type="GO" id="GO:0031012">
    <property type="term" value="C:extracellular matrix"/>
    <property type="evidence" value="ECO:0000266"/>
    <property type="project" value="RGD"/>
</dbReference>
<dbReference type="GO" id="GO:0005615">
    <property type="term" value="C:extracellular space"/>
    <property type="evidence" value="ECO:0000318"/>
    <property type="project" value="GO_Central"/>
</dbReference>
<dbReference type="GO" id="GO:0070702">
    <property type="term" value="C:inner mucus layer"/>
    <property type="evidence" value="ECO:0000250"/>
    <property type="project" value="UniProtKB"/>
</dbReference>
<dbReference type="GO" id="GO:0070701">
    <property type="term" value="C:mucus layer"/>
    <property type="evidence" value="ECO:0000314"/>
    <property type="project" value="RGD"/>
</dbReference>
<dbReference type="GO" id="GO:0070703">
    <property type="term" value="C:outer mucus layer"/>
    <property type="evidence" value="ECO:0000250"/>
    <property type="project" value="UniProtKB"/>
</dbReference>
<dbReference type="GO" id="GO:1903135">
    <property type="term" value="F:cupric ion binding"/>
    <property type="evidence" value="ECO:0000250"/>
    <property type="project" value="UniProtKB"/>
</dbReference>
<dbReference type="GO" id="GO:1903136">
    <property type="term" value="F:cuprous ion binding"/>
    <property type="evidence" value="ECO:0000250"/>
    <property type="project" value="UniProtKB"/>
</dbReference>
<dbReference type="GO" id="GO:0005201">
    <property type="term" value="F:extracellular matrix structural constituent"/>
    <property type="evidence" value="ECO:0000266"/>
    <property type="project" value="RGD"/>
</dbReference>
<dbReference type="GO" id="GO:0042802">
    <property type="term" value="F:identical protein binding"/>
    <property type="evidence" value="ECO:0000315"/>
    <property type="project" value="RGD"/>
</dbReference>
<dbReference type="GO" id="GO:0006915">
    <property type="term" value="P:apoptotic process"/>
    <property type="evidence" value="ECO:0000266"/>
    <property type="project" value="RGD"/>
</dbReference>
<dbReference type="GO" id="GO:0071356">
    <property type="term" value="P:cellular response to tumor necrosis factor"/>
    <property type="evidence" value="ECO:0000270"/>
    <property type="project" value="RGD"/>
</dbReference>
<dbReference type="GO" id="GO:0010273">
    <property type="term" value="P:detoxification of copper ion"/>
    <property type="evidence" value="ECO:0000250"/>
    <property type="project" value="UniProtKB"/>
</dbReference>
<dbReference type="GO" id="GO:0002068">
    <property type="term" value="P:glandular epithelial cell development"/>
    <property type="evidence" value="ECO:0000266"/>
    <property type="project" value="RGD"/>
</dbReference>
<dbReference type="GO" id="GO:0048874">
    <property type="term" value="P:host-mediated regulation of intestinal microbiota composition"/>
    <property type="evidence" value="ECO:0000250"/>
    <property type="project" value="UniProtKB"/>
</dbReference>
<dbReference type="GO" id="GO:0030277">
    <property type="term" value="P:maintenance of gastrointestinal epithelium"/>
    <property type="evidence" value="ECO:0000250"/>
    <property type="project" value="UniProtKB"/>
</dbReference>
<dbReference type="GO" id="GO:0070254">
    <property type="term" value="P:mucus secretion"/>
    <property type="evidence" value="ECO:0000266"/>
    <property type="project" value="RGD"/>
</dbReference>
<dbReference type="GO" id="GO:0030336">
    <property type="term" value="P:negative regulation of cell migration"/>
    <property type="evidence" value="ECO:0000266"/>
    <property type="project" value="RGD"/>
</dbReference>
<dbReference type="GO" id="GO:0008285">
    <property type="term" value="P:negative regulation of cell population proliferation"/>
    <property type="evidence" value="ECO:0000266"/>
    <property type="project" value="RGD"/>
</dbReference>
<dbReference type="GO" id="GO:0043065">
    <property type="term" value="P:positive regulation of apoptotic process"/>
    <property type="evidence" value="ECO:0000266"/>
    <property type="project" value="RGD"/>
</dbReference>
<dbReference type="GO" id="GO:0140459">
    <property type="term" value="P:response to Gram-positive bacterium"/>
    <property type="evidence" value="ECO:0000270"/>
    <property type="project" value="RGD"/>
</dbReference>
<dbReference type="GO" id="GO:0009725">
    <property type="term" value="P:response to hormone"/>
    <property type="evidence" value="ECO:0000270"/>
    <property type="project" value="RGD"/>
</dbReference>
<dbReference type="GO" id="GO:0032496">
    <property type="term" value="P:response to lipopolysaccharide"/>
    <property type="evidence" value="ECO:0000270"/>
    <property type="project" value="RGD"/>
</dbReference>
<dbReference type="GO" id="GO:0071559">
    <property type="term" value="P:response to transforming growth factor beta"/>
    <property type="evidence" value="ECO:0000270"/>
    <property type="project" value="RGD"/>
</dbReference>
<dbReference type="GO" id="GO:0033189">
    <property type="term" value="P:response to vitamin A"/>
    <property type="evidence" value="ECO:0000270"/>
    <property type="project" value="RGD"/>
</dbReference>
<dbReference type="CDD" id="cd19941">
    <property type="entry name" value="TIL"/>
    <property type="match status" value="2"/>
</dbReference>
<dbReference type="FunFam" id="2.10.25.10:FF:000153">
    <property type="entry name" value="MUC5B isoform 1"/>
    <property type="match status" value="1"/>
</dbReference>
<dbReference type="FunFam" id="2.10.25.10:FF:000674">
    <property type="entry name" value="Mucin-2"/>
    <property type="match status" value="1"/>
</dbReference>
<dbReference type="Gene3D" id="2.10.25.10">
    <property type="entry name" value="Laminin"/>
    <property type="match status" value="3"/>
</dbReference>
<dbReference type="InterPro" id="IPR050780">
    <property type="entry name" value="Mucin_vWF_Thrombospondin_sf"/>
</dbReference>
<dbReference type="InterPro" id="IPR036084">
    <property type="entry name" value="Ser_inhib-like_sf"/>
</dbReference>
<dbReference type="InterPro" id="IPR002919">
    <property type="entry name" value="TIL_dom"/>
</dbReference>
<dbReference type="InterPro" id="IPR014853">
    <property type="entry name" value="VWF/SSPO/ZAN-like_Cys-rich_dom"/>
</dbReference>
<dbReference type="InterPro" id="IPR001007">
    <property type="entry name" value="VWF_dom"/>
</dbReference>
<dbReference type="InterPro" id="IPR001846">
    <property type="entry name" value="VWF_type-D"/>
</dbReference>
<dbReference type="InterPro" id="IPR025155">
    <property type="entry name" value="WxxW_domain"/>
</dbReference>
<dbReference type="PANTHER" id="PTHR11339">
    <property type="entry name" value="EXTRACELLULAR MATRIX GLYCOPROTEIN RELATED"/>
    <property type="match status" value="1"/>
</dbReference>
<dbReference type="PANTHER" id="PTHR11339:SF371">
    <property type="entry name" value="MUCIN-2"/>
    <property type="match status" value="1"/>
</dbReference>
<dbReference type="Pfam" id="PF08742">
    <property type="entry name" value="C8"/>
    <property type="match status" value="3"/>
</dbReference>
<dbReference type="Pfam" id="PF13330">
    <property type="entry name" value="Mucin2_WxxW"/>
    <property type="match status" value="1"/>
</dbReference>
<dbReference type="Pfam" id="PF01826">
    <property type="entry name" value="TIL"/>
    <property type="match status" value="1"/>
</dbReference>
<dbReference type="Pfam" id="PF00094">
    <property type="entry name" value="VWD"/>
    <property type="match status" value="3"/>
</dbReference>
<dbReference type="Pfam" id="PF23244">
    <property type="entry name" value="VWF"/>
    <property type="match status" value="2"/>
</dbReference>
<dbReference type="PRINTS" id="PR01217">
    <property type="entry name" value="PRICHEXTENSN"/>
</dbReference>
<dbReference type="SMART" id="SM00832">
    <property type="entry name" value="C8"/>
    <property type="match status" value="3"/>
</dbReference>
<dbReference type="SMART" id="SM00215">
    <property type="entry name" value="VWC_out"/>
    <property type="match status" value="2"/>
</dbReference>
<dbReference type="SMART" id="SM00216">
    <property type="entry name" value="VWD"/>
    <property type="match status" value="3"/>
</dbReference>
<dbReference type="SUPFAM" id="SSF57603">
    <property type="entry name" value="FnI-like domain"/>
    <property type="match status" value="2"/>
</dbReference>
<dbReference type="SUPFAM" id="SSF57567">
    <property type="entry name" value="Serine protease inhibitors"/>
    <property type="match status" value="3"/>
</dbReference>
<dbReference type="PROSITE" id="PS51233">
    <property type="entry name" value="VWFD"/>
    <property type="match status" value="3"/>
</dbReference>
<protein>
    <recommendedName>
        <fullName evidence="8">Mucin-2</fullName>
        <shortName evidence="8">MUC-2</shortName>
    </recommendedName>
    <alternativeName>
        <fullName>Intestinal mucin-2</fullName>
    </alternativeName>
</protein>